<dbReference type="EC" id="4.1.3.39" evidence="1"/>
<dbReference type="EMBL" id="CP001280">
    <property type="protein sequence ID" value="ACK50437.1"/>
    <property type="molecule type" value="Genomic_DNA"/>
</dbReference>
<dbReference type="RefSeq" id="WP_012590507.1">
    <property type="nucleotide sequence ID" value="NC_011666.1"/>
</dbReference>
<dbReference type="SMR" id="B8ESV2"/>
<dbReference type="STRING" id="395965.Msil_1479"/>
<dbReference type="KEGG" id="msl:Msil_1479"/>
<dbReference type="eggNOG" id="COG0119">
    <property type="taxonomic scope" value="Bacteria"/>
</dbReference>
<dbReference type="HOGENOM" id="CLU_049173_0_0_5"/>
<dbReference type="OrthoDB" id="9803573at2"/>
<dbReference type="Proteomes" id="UP000002257">
    <property type="component" value="Chromosome"/>
</dbReference>
<dbReference type="GO" id="GO:0003852">
    <property type="term" value="F:2-isopropylmalate synthase activity"/>
    <property type="evidence" value="ECO:0007669"/>
    <property type="project" value="TreeGrafter"/>
</dbReference>
<dbReference type="GO" id="GO:0008701">
    <property type="term" value="F:4-hydroxy-2-oxovalerate aldolase activity"/>
    <property type="evidence" value="ECO:0007669"/>
    <property type="project" value="UniProtKB-UniRule"/>
</dbReference>
<dbReference type="GO" id="GO:0030145">
    <property type="term" value="F:manganese ion binding"/>
    <property type="evidence" value="ECO:0007669"/>
    <property type="project" value="UniProtKB-UniRule"/>
</dbReference>
<dbReference type="GO" id="GO:0009056">
    <property type="term" value="P:catabolic process"/>
    <property type="evidence" value="ECO:0007669"/>
    <property type="project" value="UniProtKB-KW"/>
</dbReference>
<dbReference type="GO" id="GO:0009098">
    <property type="term" value="P:L-leucine biosynthetic process"/>
    <property type="evidence" value="ECO:0007669"/>
    <property type="project" value="TreeGrafter"/>
</dbReference>
<dbReference type="CDD" id="cd07943">
    <property type="entry name" value="DRE_TIM_HOA"/>
    <property type="match status" value="1"/>
</dbReference>
<dbReference type="Gene3D" id="1.10.8.60">
    <property type="match status" value="1"/>
</dbReference>
<dbReference type="Gene3D" id="3.20.20.70">
    <property type="entry name" value="Aldolase class I"/>
    <property type="match status" value="1"/>
</dbReference>
<dbReference type="HAMAP" id="MF_01656">
    <property type="entry name" value="HOA"/>
    <property type="match status" value="1"/>
</dbReference>
<dbReference type="InterPro" id="IPR050073">
    <property type="entry name" value="2-IPM_HCS-like"/>
</dbReference>
<dbReference type="InterPro" id="IPR017629">
    <property type="entry name" value="4OH_2_O-val_aldolase"/>
</dbReference>
<dbReference type="InterPro" id="IPR013785">
    <property type="entry name" value="Aldolase_TIM"/>
</dbReference>
<dbReference type="InterPro" id="IPR012425">
    <property type="entry name" value="DmpG_comm"/>
</dbReference>
<dbReference type="InterPro" id="IPR035685">
    <property type="entry name" value="DRE_TIM_HOA"/>
</dbReference>
<dbReference type="InterPro" id="IPR000891">
    <property type="entry name" value="PYR_CT"/>
</dbReference>
<dbReference type="NCBIfam" id="TIGR03217">
    <property type="entry name" value="4OH_2_O_val_ald"/>
    <property type="match status" value="1"/>
</dbReference>
<dbReference type="NCBIfam" id="NF006049">
    <property type="entry name" value="PRK08195.1"/>
    <property type="match status" value="1"/>
</dbReference>
<dbReference type="PANTHER" id="PTHR10277:SF9">
    <property type="entry name" value="2-ISOPROPYLMALATE SYNTHASE 1, CHLOROPLASTIC-RELATED"/>
    <property type="match status" value="1"/>
</dbReference>
<dbReference type="PANTHER" id="PTHR10277">
    <property type="entry name" value="HOMOCITRATE SYNTHASE-RELATED"/>
    <property type="match status" value="1"/>
</dbReference>
<dbReference type="Pfam" id="PF07836">
    <property type="entry name" value="DmpG_comm"/>
    <property type="match status" value="1"/>
</dbReference>
<dbReference type="Pfam" id="PF00682">
    <property type="entry name" value="HMGL-like"/>
    <property type="match status" value="1"/>
</dbReference>
<dbReference type="SUPFAM" id="SSF51569">
    <property type="entry name" value="Aldolase"/>
    <property type="match status" value="1"/>
</dbReference>
<dbReference type="SUPFAM" id="SSF89000">
    <property type="entry name" value="post-HMGL domain-like"/>
    <property type="match status" value="1"/>
</dbReference>
<dbReference type="PROSITE" id="PS50991">
    <property type="entry name" value="PYR_CT"/>
    <property type="match status" value="1"/>
</dbReference>
<comment type="catalytic activity">
    <reaction evidence="1">
        <text>(S)-4-hydroxy-2-oxopentanoate = acetaldehyde + pyruvate</text>
        <dbReference type="Rhea" id="RHEA:22624"/>
        <dbReference type="ChEBI" id="CHEBI:15343"/>
        <dbReference type="ChEBI" id="CHEBI:15361"/>
        <dbReference type="ChEBI" id="CHEBI:73143"/>
        <dbReference type="EC" id="4.1.3.39"/>
    </reaction>
</comment>
<comment type="similarity">
    <text evidence="1">Belongs to the 4-hydroxy-2-oxovalerate aldolase family.</text>
</comment>
<feature type="chain" id="PRO_0000387842" description="4-hydroxy-2-oxovalerate aldolase">
    <location>
        <begin position="1"/>
        <end position="346"/>
    </location>
</feature>
<feature type="domain" description="Pyruvate carboxyltransferase" evidence="1">
    <location>
        <begin position="9"/>
        <end position="261"/>
    </location>
</feature>
<feature type="active site" description="Proton acceptor" evidence="1">
    <location>
        <position position="21"/>
    </location>
</feature>
<feature type="binding site" evidence="1">
    <location>
        <begin position="17"/>
        <end position="18"/>
    </location>
    <ligand>
        <name>substrate</name>
    </ligand>
</feature>
<feature type="binding site" evidence="1">
    <location>
        <position position="18"/>
    </location>
    <ligand>
        <name>Mn(2+)</name>
        <dbReference type="ChEBI" id="CHEBI:29035"/>
    </ligand>
</feature>
<feature type="binding site" evidence="1">
    <location>
        <position position="171"/>
    </location>
    <ligand>
        <name>substrate</name>
    </ligand>
</feature>
<feature type="binding site" evidence="1">
    <location>
        <position position="200"/>
    </location>
    <ligand>
        <name>Mn(2+)</name>
        <dbReference type="ChEBI" id="CHEBI:29035"/>
    </ligand>
</feature>
<feature type="binding site" evidence="1">
    <location>
        <position position="200"/>
    </location>
    <ligand>
        <name>substrate</name>
    </ligand>
</feature>
<feature type="binding site" evidence="1">
    <location>
        <position position="202"/>
    </location>
    <ligand>
        <name>Mn(2+)</name>
        <dbReference type="ChEBI" id="CHEBI:29035"/>
    </ligand>
</feature>
<feature type="binding site" evidence="1">
    <location>
        <position position="291"/>
    </location>
    <ligand>
        <name>substrate</name>
    </ligand>
</feature>
<feature type="site" description="Transition state stabilizer" evidence="1">
    <location>
        <position position="17"/>
    </location>
</feature>
<accession>B8ESV2</accession>
<keyword id="KW-0058">Aromatic hydrocarbons catabolism</keyword>
<keyword id="KW-0456">Lyase</keyword>
<keyword id="KW-0464">Manganese</keyword>
<keyword id="KW-0479">Metal-binding</keyword>
<keyword id="KW-1185">Reference proteome</keyword>
<reference key="1">
    <citation type="journal article" date="2010" name="J. Bacteriol.">
        <title>Complete genome sequence of the aerobic facultative methanotroph Methylocella silvestris BL2.</title>
        <authorList>
            <person name="Chen Y."/>
            <person name="Crombie A."/>
            <person name="Rahman M.T."/>
            <person name="Dedysh S.N."/>
            <person name="Liesack W."/>
            <person name="Stott M.B."/>
            <person name="Alam M."/>
            <person name="Theisen A.R."/>
            <person name="Murrell J.C."/>
            <person name="Dunfield P.F."/>
        </authorList>
    </citation>
    <scope>NUCLEOTIDE SEQUENCE [LARGE SCALE GENOMIC DNA]</scope>
    <source>
        <strain>DSM 15510 / CIP 108128 / LMG 27833 / NCIMB 13906 / BL2</strain>
    </source>
</reference>
<organism>
    <name type="scientific">Methylocella silvestris (strain DSM 15510 / CIP 108128 / LMG 27833 / NCIMB 13906 / BL2)</name>
    <dbReference type="NCBI Taxonomy" id="395965"/>
    <lineage>
        <taxon>Bacteria</taxon>
        <taxon>Pseudomonadati</taxon>
        <taxon>Pseudomonadota</taxon>
        <taxon>Alphaproteobacteria</taxon>
        <taxon>Hyphomicrobiales</taxon>
        <taxon>Beijerinckiaceae</taxon>
        <taxon>Methylocella</taxon>
    </lineage>
</organism>
<sequence>MARINPNKLYVQDVTLRDGMHSVRHQYSLDAVRAIARALDRAHVDAIEISHGDGITGSTFNYGFGAHDDTEWIAAVAGECKFSRITVLLLPGIGTVHDLKYACEAGARSVRVATHCTEADVSRQHIEAGRKLGMDTVGFLMMAHMAPVEKLVEQALLMESYGAECVYVTDSAGALLPKQYAERVKAVRGALKPETEIGVHTHHNLTLGVANAVAGIEAGAVRVDASLAGMGAGAGNAPLEALIAVLDRMGIETGCDLHMLMDAADDLVRPLQDRPVRVDRESLSLGYAGVYSSFLRHAESASKLYGVDTRDILTELGKRRMVGGQEDMIVDVALDILKSHGAEAAQ</sequence>
<protein>
    <recommendedName>
        <fullName evidence="1">4-hydroxy-2-oxovalerate aldolase</fullName>
        <shortName evidence="1">HOA</shortName>
        <ecNumber evidence="1">4.1.3.39</ecNumber>
    </recommendedName>
    <alternativeName>
        <fullName evidence="1">4-hydroxy-2-keto-pentanoic acid aldolase</fullName>
    </alternativeName>
    <alternativeName>
        <fullName evidence="1">4-hydroxy-2-oxopentanoate aldolase</fullName>
    </alternativeName>
</protein>
<gene>
    <name type="ordered locus">Msil_1479</name>
</gene>
<proteinExistence type="inferred from homology"/>
<evidence type="ECO:0000255" key="1">
    <source>
        <dbReference type="HAMAP-Rule" id="MF_01656"/>
    </source>
</evidence>
<name>HOA_METSB</name>